<accession>B3CN47</accession>
<feature type="chain" id="PRO_1000141328" description="Small ribosomal subunit protein uS13">
    <location>
        <begin position="1"/>
        <end position="122"/>
    </location>
</feature>
<feature type="region of interest" description="Disordered" evidence="2">
    <location>
        <begin position="97"/>
        <end position="122"/>
    </location>
</feature>
<reference key="1">
    <citation type="journal article" date="2008" name="Mol. Biol. Evol.">
        <title>Genome evolution of Wolbachia strain wPip from the Culex pipiens group.</title>
        <authorList>
            <person name="Klasson L."/>
            <person name="Walker T."/>
            <person name="Sebaihia M."/>
            <person name="Sanders M.J."/>
            <person name="Quail M.A."/>
            <person name="Lord A."/>
            <person name="Sanders S."/>
            <person name="Earl J."/>
            <person name="O'Neill S.L."/>
            <person name="Thomson N."/>
            <person name="Sinkins S.P."/>
            <person name="Parkhill J."/>
        </authorList>
    </citation>
    <scope>NUCLEOTIDE SEQUENCE [LARGE SCALE GENOMIC DNA]</scope>
    <source>
        <strain>wPip</strain>
    </source>
</reference>
<evidence type="ECO:0000255" key="1">
    <source>
        <dbReference type="HAMAP-Rule" id="MF_01315"/>
    </source>
</evidence>
<evidence type="ECO:0000256" key="2">
    <source>
        <dbReference type="SAM" id="MobiDB-lite"/>
    </source>
</evidence>
<evidence type="ECO:0000305" key="3"/>
<name>RS13_WOLPP</name>
<organism>
    <name type="scientific">Wolbachia pipientis subsp. Culex pipiens (strain wPip)</name>
    <dbReference type="NCBI Taxonomy" id="570417"/>
    <lineage>
        <taxon>Bacteria</taxon>
        <taxon>Pseudomonadati</taxon>
        <taxon>Pseudomonadota</taxon>
        <taxon>Alphaproteobacteria</taxon>
        <taxon>Rickettsiales</taxon>
        <taxon>Anaplasmataceae</taxon>
        <taxon>Wolbachieae</taxon>
        <taxon>Wolbachia</taxon>
    </lineage>
</organism>
<keyword id="KW-0687">Ribonucleoprotein</keyword>
<keyword id="KW-0689">Ribosomal protein</keyword>
<keyword id="KW-0694">RNA-binding</keyword>
<keyword id="KW-0699">rRNA-binding</keyword>
<keyword id="KW-0820">tRNA-binding</keyword>
<protein>
    <recommendedName>
        <fullName evidence="1">Small ribosomal subunit protein uS13</fullName>
    </recommendedName>
    <alternativeName>
        <fullName evidence="3">30S ribosomal protein S13</fullName>
    </alternativeName>
</protein>
<gene>
    <name evidence="1" type="primary">rpsM</name>
    <name type="ordered locus">WP1187</name>
</gene>
<comment type="function">
    <text evidence="1">Located at the top of the head of the 30S subunit, it contacts several helices of the 16S rRNA. In the 70S ribosome it contacts the 23S rRNA (bridge B1a) and protein L5 of the 50S subunit (bridge B1b), connecting the 2 subunits; these bridges are implicated in subunit movement. Contacts the tRNAs in the A and P-sites.</text>
</comment>
<comment type="subunit">
    <text evidence="1">Part of the 30S ribosomal subunit. Forms a loose heterodimer with protein S19. Forms two bridges to the 50S subunit in the 70S ribosome.</text>
</comment>
<comment type="similarity">
    <text evidence="1">Belongs to the universal ribosomal protein uS13 family.</text>
</comment>
<sequence>MARIAGINVPVKKCVPFALTYIHGIGITTANIICRSCKIDERKRVLELQDEDIEKISSFIRQKYVIEGELRKKVAMDIKSLMEIGCYRGLRHRKGLPVRGQRTHTNAKTRKGRSKLPIAGKK</sequence>
<dbReference type="EMBL" id="AM999887">
    <property type="protein sequence ID" value="CAQ55295.1"/>
    <property type="molecule type" value="Genomic_DNA"/>
</dbReference>
<dbReference type="RefSeq" id="WP_007302553.1">
    <property type="nucleotide sequence ID" value="NC_010981.1"/>
</dbReference>
<dbReference type="SMR" id="B3CN47"/>
<dbReference type="KEGG" id="wpi:WP1187"/>
<dbReference type="eggNOG" id="COG0099">
    <property type="taxonomic scope" value="Bacteria"/>
</dbReference>
<dbReference type="HOGENOM" id="CLU_103849_1_2_5"/>
<dbReference type="Proteomes" id="UP000008814">
    <property type="component" value="Chromosome"/>
</dbReference>
<dbReference type="GO" id="GO:0005829">
    <property type="term" value="C:cytosol"/>
    <property type="evidence" value="ECO:0007669"/>
    <property type="project" value="TreeGrafter"/>
</dbReference>
<dbReference type="GO" id="GO:0015935">
    <property type="term" value="C:small ribosomal subunit"/>
    <property type="evidence" value="ECO:0007669"/>
    <property type="project" value="TreeGrafter"/>
</dbReference>
<dbReference type="GO" id="GO:0019843">
    <property type="term" value="F:rRNA binding"/>
    <property type="evidence" value="ECO:0007669"/>
    <property type="project" value="UniProtKB-UniRule"/>
</dbReference>
<dbReference type="GO" id="GO:0003735">
    <property type="term" value="F:structural constituent of ribosome"/>
    <property type="evidence" value="ECO:0007669"/>
    <property type="project" value="InterPro"/>
</dbReference>
<dbReference type="GO" id="GO:0000049">
    <property type="term" value="F:tRNA binding"/>
    <property type="evidence" value="ECO:0007669"/>
    <property type="project" value="UniProtKB-UniRule"/>
</dbReference>
<dbReference type="GO" id="GO:0006412">
    <property type="term" value="P:translation"/>
    <property type="evidence" value="ECO:0007669"/>
    <property type="project" value="UniProtKB-UniRule"/>
</dbReference>
<dbReference type="FunFam" id="1.10.8.50:FF:000001">
    <property type="entry name" value="30S ribosomal protein S13"/>
    <property type="match status" value="1"/>
</dbReference>
<dbReference type="FunFam" id="4.10.910.10:FF:000001">
    <property type="entry name" value="30S ribosomal protein S13"/>
    <property type="match status" value="1"/>
</dbReference>
<dbReference type="Gene3D" id="1.10.8.50">
    <property type="match status" value="1"/>
</dbReference>
<dbReference type="Gene3D" id="4.10.910.10">
    <property type="entry name" value="30s ribosomal protein s13, domain 2"/>
    <property type="match status" value="1"/>
</dbReference>
<dbReference type="HAMAP" id="MF_01315">
    <property type="entry name" value="Ribosomal_uS13"/>
    <property type="match status" value="1"/>
</dbReference>
<dbReference type="InterPro" id="IPR027437">
    <property type="entry name" value="Rbsml_uS13_C"/>
</dbReference>
<dbReference type="InterPro" id="IPR001892">
    <property type="entry name" value="Ribosomal_uS13"/>
</dbReference>
<dbReference type="InterPro" id="IPR010979">
    <property type="entry name" value="Ribosomal_uS13-like_H2TH"/>
</dbReference>
<dbReference type="InterPro" id="IPR019980">
    <property type="entry name" value="Ribosomal_uS13_bac-type"/>
</dbReference>
<dbReference type="InterPro" id="IPR018269">
    <property type="entry name" value="Ribosomal_uS13_CS"/>
</dbReference>
<dbReference type="NCBIfam" id="TIGR03631">
    <property type="entry name" value="uS13_bact"/>
    <property type="match status" value="1"/>
</dbReference>
<dbReference type="PANTHER" id="PTHR10871">
    <property type="entry name" value="30S RIBOSOMAL PROTEIN S13/40S RIBOSOMAL PROTEIN S18"/>
    <property type="match status" value="1"/>
</dbReference>
<dbReference type="PANTHER" id="PTHR10871:SF1">
    <property type="entry name" value="SMALL RIBOSOMAL SUBUNIT PROTEIN US13M"/>
    <property type="match status" value="1"/>
</dbReference>
<dbReference type="Pfam" id="PF00416">
    <property type="entry name" value="Ribosomal_S13"/>
    <property type="match status" value="1"/>
</dbReference>
<dbReference type="PIRSF" id="PIRSF002134">
    <property type="entry name" value="Ribosomal_S13"/>
    <property type="match status" value="1"/>
</dbReference>
<dbReference type="SUPFAM" id="SSF46946">
    <property type="entry name" value="S13-like H2TH domain"/>
    <property type="match status" value="1"/>
</dbReference>
<dbReference type="PROSITE" id="PS00646">
    <property type="entry name" value="RIBOSOMAL_S13_1"/>
    <property type="match status" value="1"/>
</dbReference>
<dbReference type="PROSITE" id="PS50159">
    <property type="entry name" value="RIBOSOMAL_S13_2"/>
    <property type="match status" value="1"/>
</dbReference>
<proteinExistence type="inferred from homology"/>